<evidence type="ECO:0000250" key="1"/>
<evidence type="ECO:0000255" key="2"/>
<evidence type="ECO:0000305" key="3"/>
<organism>
    <name type="scientific">Nandina domestica</name>
    <name type="common">Heavenly bamboo</name>
    <dbReference type="NCBI Taxonomy" id="41776"/>
    <lineage>
        <taxon>Eukaryota</taxon>
        <taxon>Viridiplantae</taxon>
        <taxon>Streptophyta</taxon>
        <taxon>Embryophyta</taxon>
        <taxon>Tracheophyta</taxon>
        <taxon>Spermatophyta</taxon>
        <taxon>Magnoliopsida</taxon>
        <taxon>Ranunculales</taxon>
        <taxon>Berberidaceae</taxon>
        <taxon>Nandinoideae</taxon>
        <taxon>Nandineae</taxon>
        <taxon>Nandina</taxon>
    </lineage>
</organism>
<protein>
    <recommendedName>
        <fullName>NAD(P)H-quinone oxidoreductase subunit 5, chloroplastic</fullName>
        <ecNumber>7.1.1.-</ecNumber>
    </recommendedName>
    <alternativeName>
        <fullName>NAD(P)H dehydrogenase subunit 5</fullName>
    </alternativeName>
    <alternativeName>
        <fullName>NADH-plastoquinone oxidoreductase subunit 5</fullName>
    </alternativeName>
</protein>
<geneLocation type="chloroplast"/>
<accession>Q09FR3</accession>
<dbReference type="EC" id="7.1.1.-"/>
<dbReference type="EMBL" id="DQ923117">
    <property type="protein sequence ID" value="ABI49912.1"/>
    <property type="molecule type" value="Genomic_DNA"/>
</dbReference>
<dbReference type="RefSeq" id="YP_740698.1">
    <property type="nucleotide sequence ID" value="NC_008336.1"/>
</dbReference>
<dbReference type="SMR" id="Q09FR3"/>
<dbReference type="GeneID" id="4271645"/>
<dbReference type="GO" id="GO:0009535">
    <property type="term" value="C:chloroplast thylakoid membrane"/>
    <property type="evidence" value="ECO:0007669"/>
    <property type="project" value="UniProtKB-SubCell"/>
</dbReference>
<dbReference type="GO" id="GO:0008137">
    <property type="term" value="F:NADH dehydrogenase (ubiquinone) activity"/>
    <property type="evidence" value="ECO:0007669"/>
    <property type="project" value="InterPro"/>
</dbReference>
<dbReference type="GO" id="GO:0048038">
    <property type="term" value="F:quinone binding"/>
    <property type="evidence" value="ECO:0007669"/>
    <property type="project" value="UniProtKB-KW"/>
</dbReference>
<dbReference type="GO" id="GO:0042773">
    <property type="term" value="P:ATP synthesis coupled electron transport"/>
    <property type="evidence" value="ECO:0007669"/>
    <property type="project" value="InterPro"/>
</dbReference>
<dbReference type="GO" id="GO:0015990">
    <property type="term" value="P:electron transport coupled proton transport"/>
    <property type="evidence" value="ECO:0007669"/>
    <property type="project" value="TreeGrafter"/>
</dbReference>
<dbReference type="Gene3D" id="1.20.5.2700">
    <property type="match status" value="1"/>
</dbReference>
<dbReference type="InterPro" id="IPR002128">
    <property type="entry name" value="NADH_UbQ_OxRdtase_chlpt_su5_C"/>
</dbReference>
<dbReference type="InterPro" id="IPR018393">
    <property type="entry name" value="NADHpl_OxRdtase_5_subgr"/>
</dbReference>
<dbReference type="InterPro" id="IPR001750">
    <property type="entry name" value="ND/Mrp_TM"/>
</dbReference>
<dbReference type="InterPro" id="IPR003945">
    <property type="entry name" value="NU5C-like"/>
</dbReference>
<dbReference type="InterPro" id="IPR001516">
    <property type="entry name" value="Proton_antipo_N"/>
</dbReference>
<dbReference type="NCBIfam" id="TIGR01974">
    <property type="entry name" value="NDH_I_L"/>
    <property type="match status" value="1"/>
</dbReference>
<dbReference type="NCBIfam" id="NF005141">
    <property type="entry name" value="PRK06590.1"/>
    <property type="match status" value="1"/>
</dbReference>
<dbReference type="PANTHER" id="PTHR42829">
    <property type="entry name" value="NADH-UBIQUINONE OXIDOREDUCTASE CHAIN 5"/>
    <property type="match status" value="1"/>
</dbReference>
<dbReference type="PANTHER" id="PTHR42829:SF2">
    <property type="entry name" value="NADH-UBIQUINONE OXIDOREDUCTASE CHAIN 5"/>
    <property type="match status" value="1"/>
</dbReference>
<dbReference type="Pfam" id="PF01010">
    <property type="entry name" value="Proton_antipo_C"/>
    <property type="match status" value="1"/>
</dbReference>
<dbReference type="Pfam" id="PF00361">
    <property type="entry name" value="Proton_antipo_M"/>
    <property type="match status" value="1"/>
</dbReference>
<dbReference type="Pfam" id="PF00662">
    <property type="entry name" value="Proton_antipo_N"/>
    <property type="match status" value="1"/>
</dbReference>
<dbReference type="PRINTS" id="PR01434">
    <property type="entry name" value="NADHDHGNASE5"/>
</dbReference>
<dbReference type="PRINTS" id="PR01435">
    <property type="entry name" value="NPOXDRDTASE5"/>
</dbReference>
<reference key="1">
    <citation type="journal article" date="2006" name="BMC Plant Biol.">
        <title>Rapid and accurate pyrosequencing of angiosperm plastid genomes.</title>
        <authorList>
            <person name="Moore M.J."/>
            <person name="Dhingra A."/>
            <person name="Soltis P.S."/>
            <person name="Shaw R."/>
            <person name="Farmerie W.G."/>
            <person name="Folta K.M."/>
            <person name="Soltis D.E."/>
        </authorList>
    </citation>
    <scope>NUCLEOTIDE SEQUENCE [LARGE SCALE GENOMIC DNA]</scope>
</reference>
<name>NU5C_NANDO</name>
<sequence>MEHTYQYAWIIPFVPLPVPIAIGVGLLLVPTATKSLRRMWAFLSVLLLSIIMIFSADLSIQQIKGSLIHQYVWSWTINNDFSLEFGYLIDPLTSIMLILITTVGIMVLIYSDNYMSHDQGYLRFFAYMSFSNASMLGLVTSCNLIQIYIFWELVGMCSYLLIGFWFTRPIAASACQKAFVTNRVGDFGLLLGILGFYFITGSFEFRDLFEITNNLMDNGGVNSLFLTLCASLLFVGAIAKSAQFPLHVWLPDAMEGPTPISALIHAATMVAAGIFLVARLLPLFTVIPYVMNFISLIGIITILLGATLALAQRDIKRSLAYSTMSQLGYTMLALGMGSYRAALFHLITHAYSKALLFLGSGSIIHSMETVIGYSPEKSQNMVLMGGLTKYVPITKTAFLLGTLSLCGIPPLACFWSKDEILNDSWLYSPIFAIIACFTAGLTAFYMFRMYLLTFEGHLNAHFQNYSGKKNSSFYSISIWGKEGAKAIKQNSVLSTMNNNESAYLFSKKTYPIDGNVRNMMRSLITITNFSNKKTSPYPHESDNTMLLPLLILVLFTLFVGFIGIPFDQGGIDFDILSKLLTPSINLLHSNSNNSVDWYEFVTNAFFSVSIAYSGIFIASLLYRPVYSSFQNLDLINSFVKMSPKRIFWDKIINVIYNWSYNRGYIDVFYTTTFTRGIRGVAELIYFFDRQVIDGITNGVGITSFFVGEGIKYVGGGRISSYLFLYLFYVSIFLLIYYFFNL</sequence>
<gene>
    <name type="primary">ndhF</name>
</gene>
<feature type="chain" id="PRO_0000360950" description="NAD(P)H-quinone oxidoreductase subunit 5, chloroplastic">
    <location>
        <begin position="1"/>
        <end position="741"/>
    </location>
</feature>
<feature type="transmembrane region" description="Helical" evidence="2">
    <location>
        <begin position="9"/>
        <end position="29"/>
    </location>
</feature>
<feature type="transmembrane region" description="Helical" evidence="2">
    <location>
        <begin position="40"/>
        <end position="60"/>
    </location>
</feature>
<feature type="transmembrane region" description="Helical" evidence="2">
    <location>
        <begin position="89"/>
        <end position="109"/>
    </location>
</feature>
<feature type="transmembrane region" description="Helical" evidence="2">
    <location>
        <begin position="125"/>
        <end position="145"/>
    </location>
</feature>
<feature type="transmembrane region" description="Helical" evidence="2">
    <location>
        <begin position="147"/>
        <end position="167"/>
    </location>
</feature>
<feature type="transmembrane region" description="Helical" evidence="2">
    <location>
        <begin position="185"/>
        <end position="205"/>
    </location>
</feature>
<feature type="transmembrane region" description="Helical" evidence="2">
    <location>
        <begin position="219"/>
        <end position="239"/>
    </location>
</feature>
<feature type="transmembrane region" description="Helical" evidence="2">
    <location>
        <begin position="258"/>
        <end position="278"/>
    </location>
</feature>
<feature type="transmembrane region" description="Helical" evidence="2">
    <location>
        <begin position="283"/>
        <end position="303"/>
    </location>
</feature>
<feature type="transmembrane region" description="Helical" evidence="2">
    <location>
        <begin position="327"/>
        <end position="347"/>
    </location>
</feature>
<feature type="transmembrane region" description="Helical" evidence="2">
    <location>
        <begin position="354"/>
        <end position="374"/>
    </location>
</feature>
<feature type="transmembrane region" description="Helical" evidence="2">
    <location>
        <begin position="396"/>
        <end position="416"/>
    </location>
</feature>
<feature type="transmembrane region" description="Helical" evidence="2">
    <location>
        <begin position="425"/>
        <end position="445"/>
    </location>
</feature>
<feature type="transmembrane region" description="Helical" evidence="2">
    <location>
        <begin position="546"/>
        <end position="566"/>
    </location>
</feature>
<feature type="transmembrane region" description="Helical" evidence="2">
    <location>
        <begin position="600"/>
        <end position="620"/>
    </location>
</feature>
<feature type="transmembrane region" description="Helical" evidence="2">
    <location>
        <begin position="721"/>
        <end position="741"/>
    </location>
</feature>
<keyword id="KW-0150">Chloroplast</keyword>
<keyword id="KW-0472">Membrane</keyword>
<keyword id="KW-0520">NAD</keyword>
<keyword id="KW-0521">NADP</keyword>
<keyword id="KW-0934">Plastid</keyword>
<keyword id="KW-0618">Plastoquinone</keyword>
<keyword id="KW-0874">Quinone</keyword>
<keyword id="KW-0793">Thylakoid</keyword>
<keyword id="KW-1278">Translocase</keyword>
<keyword id="KW-0812">Transmembrane</keyword>
<keyword id="KW-1133">Transmembrane helix</keyword>
<keyword id="KW-0813">Transport</keyword>
<proteinExistence type="inferred from homology"/>
<comment type="function">
    <text evidence="1">NDH shuttles electrons from NAD(P)H:plastoquinone, via FMN and iron-sulfur (Fe-S) centers, to quinones in the photosynthetic chain and possibly in a chloroplast respiratory chain. The immediate electron acceptor for the enzyme in this species is believed to be plastoquinone. Couples the redox reaction to proton translocation, and thus conserves the redox energy in a proton gradient (By similarity).</text>
</comment>
<comment type="catalytic activity">
    <reaction>
        <text>a plastoquinone + NADH + (n+1) H(+)(in) = a plastoquinol + NAD(+) + n H(+)(out)</text>
        <dbReference type="Rhea" id="RHEA:42608"/>
        <dbReference type="Rhea" id="RHEA-COMP:9561"/>
        <dbReference type="Rhea" id="RHEA-COMP:9562"/>
        <dbReference type="ChEBI" id="CHEBI:15378"/>
        <dbReference type="ChEBI" id="CHEBI:17757"/>
        <dbReference type="ChEBI" id="CHEBI:57540"/>
        <dbReference type="ChEBI" id="CHEBI:57945"/>
        <dbReference type="ChEBI" id="CHEBI:62192"/>
    </reaction>
</comment>
<comment type="catalytic activity">
    <reaction>
        <text>a plastoquinone + NADPH + (n+1) H(+)(in) = a plastoquinol + NADP(+) + n H(+)(out)</text>
        <dbReference type="Rhea" id="RHEA:42612"/>
        <dbReference type="Rhea" id="RHEA-COMP:9561"/>
        <dbReference type="Rhea" id="RHEA-COMP:9562"/>
        <dbReference type="ChEBI" id="CHEBI:15378"/>
        <dbReference type="ChEBI" id="CHEBI:17757"/>
        <dbReference type="ChEBI" id="CHEBI:57783"/>
        <dbReference type="ChEBI" id="CHEBI:58349"/>
        <dbReference type="ChEBI" id="CHEBI:62192"/>
    </reaction>
</comment>
<comment type="subunit">
    <text evidence="1">NDH is composed of at least 16 different subunits, 5 of which are encoded in the nucleus.</text>
</comment>
<comment type="subcellular location">
    <subcellularLocation>
        <location evidence="1">Plastid</location>
        <location evidence="1">Chloroplast thylakoid membrane</location>
        <topology evidence="1">Multi-pass membrane protein</topology>
    </subcellularLocation>
</comment>
<comment type="similarity">
    <text evidence="3">Belongs to the complex I subunit 5 family.</text>
</comment>